<gene>
    <name evidence="1" type="primary">hisG</name>
    <name type="ordered locus">Ecok1_19270</name>
    <name type="ORF">APECO1_1116</name>
</gene>
<dbReference type="EC" id="2.4.2.17" evidence="1"/>
<dbReference type="EMBL" id="CP000468">
    <property type="protein sequence ID" value="ABJ01421.1"/>
    <property type="molecule type" value="Genomic_DNA"/>
</dbReference>
<dbReference type="RefSeq" id="WP_000131782.1">
    <property type="nucleotide sequence ID" value="NZ_CADILS010000063.1"/>
</dbReference>
<dbReference type="SMR" id="A1ACN1"/>
<dbReference type="GeneID" id="93775154"/>
<dbReference type="KEGG" id="ecv:APECO1_1116"/>
<dbReference type="HOGENOM" id="CLU_038115_1_0_6"/>
<dbReference type="UniPathway" id="UPA00031">
    <property type="reaction ID" value="UER00006"/>
</dbReference>
<dbReference type="Proteomes" id="UP000008216">
    <property type="component" value="Chromosome"/>
</dbReference>
<dbReference type="GO" id="GO:0005737">
    <property type="term" value="C:cytoplasm"/>
    <property type="evidence" value="ECO:0007669"/>
    <property type="project" value="UniProtKB-SubCell"/>
</dbReference>
<dbReference type="GO" id="GO:0005524">
    <property type="term" value="F:ATP binding"/>
    <property type="evidence" value="ECO:0007669"/>
    <property type="project" value="UniProtKB-KW"/>
</dbReference>
<dbReference type="GO" id="GO:0003879">
    <property type="term" value="F:ATP phosphoribosyltransferase activity"/>
    <property type="evidence" value="ECO:0007669"/>
    <property type="project" value="UniProtKB-UniRule"/>
</dbReference>
<dbReference type="GO" id="GO:0000287">
    <property type="term" value="F:magnesium ion binding"/>
    <property type="evidence" value="ECO:0007669"/>
    <property type="project" value="UniProtKB-UniRule"/>
</dbReference>
<dbReference type="GO" id="GO:0000105">
    <property type="term" value="P:L-histidine biosynthetic process"/>
    <property type="evidence" value="ECO:0007669"/>
    <property type="project" value="UniProtKB-UniRule"/>
</dbReference>
<dbReference type="CDD" id="cd13592">
    <property type="entry name" value="PBP2_HisGL2"/>
    <property type="match status" value="1"/>
</dbReference>
<dbReference type="FunFam" id="3.30.70.120:FF:000002">
    <property type="entry name" value="ATP phosphoribosyltransferase"/>
    <property type="match status" value="1"/>
</dbReference>
<dbReference type="FunFam" id="3.40.190.10:FF:000008">
    <property type="entry name" value="ATP phosphoribosyltransferase"/>
    <property type="match status" value="1"/>
</dbReference>
<dbReference type="Gene3D" id="3.30.70.120">
    <property type="match status" value="1"/>
</dbReference>
<dbReference type="Gene3D" id="3.40.190.10">
    <property type="entry name" value="Periplasmic binding protein-like II"/>
    <property type="match status" value="2"/>
</dbReference>
<dbReference type="HAMAP" id="MF_00079">
    <property type="entry name" value="HisG_Long"/>
    <property type="match status" value="1"/>
</dbReference>
<dbReference type="InterPro" id="IPR020621">
    <property type="entry name" value="ATP-PRT_HisG_long"/>
</dbReference>
<dbReference type="InterPro" id="IPR013820">
    <property type="entry name" value="ATP_PRibTrfase_cat"/>
</dbReference>
<dbReference type="InterPro" id="IPR018198">
    <property type="entry name" value="ATP_PRibTrfase_CS"/>
</dbReference>
<dbReference type="InterPro" id="IPR001348">
    <property type="entry name" value="ATP_PRibTrfase_HisG"/>
</dbReference>
<dbReference type="InterPro" id="IPR013115">
    <property type="entry name" value="HisG_C"/>
</dbReference>
<dbReference type="InterPro" id="IPR011322">
    <property type="entry name" value="N-reg_PII-like_a/b"/>
</dbReference>
<dbReference type="InterPro" id="IPR015867">
    <property type="entry name" value="N-reg_PII/ATP_PRibTrfase_C"/>
</dbReference>
<dbReference type="NCBIfam" id="TIGR00070">
    <property type="entry name" value="hisG"/>
    <property type="match status" value="1"/>
</dbReference>
<dbReference type="NCBIfam" id="TIGR03455">
    <property type="entry name" value="HisG_C-term"/>
    <property type="match status" value="1"/>
</dbReference>
<dbReference type="PANTHER" id="PTHR21403:SF8">
    <property type="entry name" value="ATP PHOSPHORIBOSYLTRANSFERASE"/>
    <property type="match status" value="1"/>
</dbReference>
<dbReference type="PANTHER" id="PTHR21403">
    <property type="entry name" value="ATP PHOSPHORIBOSYLTRANSFERASE ATP-PRTASE"/>
    <property type="match status" value="1"/>
</dbReference>
<dbReference type="Pfam" id="PF01634">
    <property type="entry name" value="HisG"/>
    <property type="match status" value="1"/>
</dbReference>
<dbReference type="Pfam" id="PF08029">
    <property type="entry name" value="HisG_C"/>
    <property type="match status" value="1"/>
</dbReference>
<dbReference type="SUPFAM" id="SSF54913">
    <property type="entry name" value="GlnB-like"/>
    <property type="match status" value="1"/>
</dbReference>
<dbReference type="SUPFAM" id="SSF53850">
    <property type="entry name" value="Periplasmic binding protein-like II"/>
    <property type="match status" value="1"/>
</dbReference>
<dbReference type="PROSITE" id="PS01316">
    <property type="entry name" value="ATP_P_PHORIBOSYLTR"/>
    <property type="match status" value="1"/>
</dbReference>
<name>HIS1_ECOK1</name>
<keyword id="KW-0028">Amino-acid biosynthesis</keyword>
<keyword id="KW-0067">ATP-binding</keyword>
<keyword id="KW-0963">Cytoplasm</keyword>
<keyword id="KW-0328">Glycosyltransferase</keyword>
<keyword id="KW-0368">Histidine biosynthesis</keyword>
<keyword id="KW-0460">Magnesium</keyword>
<keyword id="KW-0479">Metal-binding</keyword>
<keyword id="KW-0547">Nucleotide-binding</keyword>
<keyword id="KW-1185">Reference proteome</keyword>
<keyword id="KW-0808">Transferase</keyword>
<evidence type="ECO:0000255" key="1">
    <source>
        <dbReference type="HAMAP-Rule" id="MF_00079"/>
    </source>
</evidence>
<organism>
    <name type="scientific">Escherichia coli O1:K1 / APEC</name>
    <dbReference type="NCBI Taxonomy" id="405955"/>
    <lineage>
        <taxon>Bacteria</taxon>
        <taxon>Pseudomonadati</taxon>
        <taxon>Pseudomonadota</taxon>
        <taxon>Gammaproteobacteria</taxon>
        <taxon>Enterobacterales</taxon>
        <taxon>Enterobacteriaceae</taxon>
        <taxon>Escherichia</taxon>
    </lineage>
</organism>
<proteinExistence type="inferred from homology"/>
<comment type="function">
    <text evidence="1">Catalyzes the condensation of ATP and 5-phosphoribose 1-diphosphate to form N'-(5'-phosphoribosyl)-ATP (PR-ATP). Has a crucial role in the pathway because the rate of histidine biosynthesis seems to be controlled primarily by regulation of HisG enzymatic activity.</text>
</comment>
<comment type="catalytic activity">
    <reaction evidence="1">
        <text>1-(5-phospho-beta-D-ribosyl)-ATP + diphosphate = 5-phospho-alpha-D-ribose 1-diphosphate + ATP</text>
        <dbReference type="Rhea" id="RHEA:18473"/>
        <dbReference type="ChEBI" id="CHEBI:30616"/>
        <dbReference type="ChEBI" id="CHEBI:33019"/>
        <dbReference type="ChEBI" id="CHEBI:58017"/>
        <dbReference type="ChEBI" id="CHEBI:73183"/>
        <dbReference type="EC" id="2.4.2.17"/>
    </reaction>
</comment>
<comment type="cofactor">
    <cofactor evidence="1">
        <name>Mg(2+)</name>
        <dbReference type="ChEBI" id="CHEBI:18420"/>
    </cofactor>
</comment>
<comment type="activity regulation">
    <text evidence="1">Feedback inhibited by histidine.</text>
</comment>
<comment type="pathway">
    <text evidence="1">Amino-acid biosynthesis; L-histidine biosynthesis; L-histidine from 5-phospho-alpha-D-ribose 1-diphosphate: step 1/9.</text>
</comment>
<comment type="subunit">
    <text evidence="1">Equilibrium between an active dimeric form, an inactive hexameric form and higher aggregates. Interconversion between the various forms is largely reversible and is influenced by the natural substrates and inhibitors of the enzyme.</text>
</comment>
<comment type="subcellular location">
    <subcellularLocation>
        <location evidence="1">Cytoplasm</location>
    </subcellularLocation>
</comment>
<comment type="similarity">
    <text evidence="1">Belongs to the ATP phosphoribosyltransferase family. Long subfamily.</text>
</comment>
<accession>A1ACN1</accession>
<sequence length="299" mass="33367">MTDNTRLRIAMQKSGRLSDDSRELLARCGIKINLHTQRLIAMAENMPIDILRVRDDDIPGLVMDGVVDLGIIGENVLEEELLNRRAQGEDPRYFTLRRLDFGGCRLSLATPVDEAWDGPLSLNGKRIATSYPHLLKRYLDQKGISFKSCLLNGSVEVAPRAGLADAICDLVSTGATLEANGLREVEVIYRSKACLIQRDGEMEESKQQLIDKLLTRIQGVIQARESKYIMMHAPTERLDEVIALLPGAERPTILPLAGDQQRVAMHMVSSETLFWETMEKLKALGASSILVLPIEKMME</sequence>
<reference key="1">
    <citation type="journal article" date="2007" name="J. Bacteriol.">
        <title>The genome sequence of avian pathogenic Escherichia coli strain O1:K1:H7 shares strong similarities with human extraintestinal pathogenic E. coli genomes.</title>
        <authorList>
            <person name="Johnson T.J."/>
            <person name="Kariyawasam S."/>
            <person name="Wannemuehler Y."/>
            <person name="Mangiamele P."/>
            <person name="Johnson S.J."/>
            <person name="Doetkott C."/>
            <person name="Skyberg J.A."/>
            <person name="Lynne A.M."/>
            <person name="Johnson J.R."/>
            <person name="Nolan L.K."/>
        </authorList>
    </citation>
    <scope>NUCLEOTIDE SEQUENCE [LARGE SCALE GENOMIC DNA]</scope>
</reference>
<protein>
    <recommendedName>
        <fullName evidence="1">ATP phosphoribosyltransferase</fullName>
        <shortName evidence="1">ATP-PRT</shortName>
        <shortName evidence="1">ATP-PRTase</shortName>
        <ecNumber evidence="1">2.4.2.17</ecNumber>
    </recommendedName>
</protein>
<feature type="chain" id="PRO_1000004458" description="ATP phosphoribosyltransferase">
    <location>
        <begin position="1"/>
        <end position="299"/>
    </location>
</feature>